<dbReference type="EC" id="2.7.11.1"/>
<dbReference type="EMBL" id="AY232269">
    <property type="protein sequence ID" value="AAO83652.1"/>
    <property type="molecule type" value="Genomic_DNA"/>
</dbReference>
<dbReference type="EMBL" id="AAFI02000003">
    <property type="protein sequence ID" value="EAL73189.1"/>
    <property type="molecule type" value="Genomic_DNA"/>
</dbReference>
<dbReference type="RefSeq" id="XP_647238.1">
    <property type="nucleotide sequence ID" value="XM_642146.1"/>
</dbReference>
<dbReference type="SMR" id="Q55GE6"/>
<dbReference type="FunCoup" id="Q55GE6">
    <property type="interactions" value="614"/>
</dbReference>
<dbReference type="STRING" id="44689.Q55GE6"/>
<dbReference type="GlyGen" id="Q55GE6">
    <property type="glycosylation" value="1 site"/>
</dbReference>
<dbReference type="PaxDb" id="44689-DDB0191295"/>
<dbReference type="EnsemblProtists" id="EAL73189">
    <property type="protein sequence ID" value="EAL73189"/>
    <property type="gene ID" value="DDB_G0267472"/>
</dbReference>
<dbReference type="GeneID" id="8616043"/>
<dbReference type="KEGG" id="ddi:DDB_G0267472"/>
<dbReference type="dictyBase" id="DDB_G0267472">
    <property type="gene designation" value="roco7"/>
</dbReference>
<dbReference type="VEuPathDB" id="AmoebaDB:DDB_G0267472"/>
<dbReference type="eggNOG" id="KOG0192">
    <property type="taxonomic scope" value="Eukaryota"/>
</dbReference>
<dbReference type="HOGENOM" id="CLU_227807_0_0_1"/>
<dbReference type="InParanoid" id="Q55GE6"/>
<dbReference type="OMA" id="WNWRWLA"/>
<dbReference type="Reactome" id="R-DDI-5675482">
    <property type="pathway name" value="Regulation of necroptotic cell death"/>
</dbReference>
<dbReference type="PRO" id="PR:Q55GE6"/>
<dbReference type="Proteomes" id="UP000002195">
    <property type="component" value="Chromosome 1"/>
</dbReference>
<dbReference type="GO" id="GO:0005737">
    <property type="term" value="C:cytoplasm"/>
    <property type="evidence" value="ECO:0000318"/>
    <property type="project" value="GO_Central"/>
</dbReference>
<dbReference type="GO" id="GO:0005829">
    <property type="term" value="C:cytosol"/>
    <property type="evidence" value="ECO:0000314"/>
    <property type="project" value="dictyBase"/>
</dbReference>
<dbReference type="GO" id="GO:0005524">
    <property type="term" value="F:ATP binding"/>
    <property type="evidence" value="ECO:0007669"/>
    <property type="project" value="UniProtKB-KW"/>
</dbReference>
<dbReference type="GO" id="GO:0004672">
    <property type="term" value="F:protein kinase activity"/>
    <property type="evidence" value="ECO:0000318"/>
    <property type="project" value="GO_Central"/>
</dbReference>
<dbReference type="GO" id="GO:0106310">
    <property type="term" value="F:protein serine kinase activity"/>
    <property type="evidence" value="ECO:0007669"/>
    <property type="project" value="RHEA"/>
</dbReference>
<dbReference type="GO" id="GO:0004674">
    <property type="term" value="F:protein serine/threonine kinase activity"/>
    <property type="evidence" value="ECO:0007669"/>
    <property type="project" value="UniProtKB-KW"/>
</dbReference>
<dbReference type="GO" id="GO:0007165">
    <property type="term" value="P:signal transduction"/>
    <property type="evidence" value="ECO:0000318"/>
    <property type="project" value="GO_Central"/>
</dbReference>
<dbReference type="CDD" id="cd13999">
    <property type="entry name" value="STKc_MAP3K-like"/>
    <property type="match status" value="1"/>
</dbReference>
<dbReference type="Gene3D" id="3.30.310.200">
    <property type="match status" value="1"/>
</dbReference>
<dbReference type="Gene3D" id="1.10.506.10">
    <property type="entry name" value="GTPase Activation - p120gap, domain 1"/>
    <property type="match status" value="1"/>
</dbReference>
<dbReference type="Gene3D" id="3.40.50.300">
    <property type="entry name" value="P-loop containing nucleotide triphosphate hydrolases"/>
    <property type="match status" value="1"/>
</dbReference>
<dbReference type="Gene3D" id="3.30.200.20">
    <property type="entry name" value="Phosphorylase Kinase, domain 1"/>
    <property type="match status" value="1"/>
</dbReference>
<dbReference type="Gene3D" id="1.10.510.10">
    <property type="entry name" value="Transferase(Phosphotransferase) domain 1"/>
    <property type="match status" value="1"/>
</dbReference>
<dbReference type="Gene3D" id="2.130.10.10">
    <property type="entry name" value="YVTN repeat-like/Quinoprotein amine dehydrogenase"/>
    <property type="match status" value="1"/>
</dbReference>
<dbReference type="InterPro" id="IPR032171">
    <property type="entry name" value="COR-A"/>
</dbReference>
<dbReference type="InterPro" id="IPR011009">
    <property type="entry name" value="Kinase-like_dom_sf"/>
</dbReference>
<dbReference type="InterPro" id="IPR027417">
    <property type="entry name" value="P-loop_NTPase"/>
</dbReference>
<dbReference type="InterPro" id="IPR000719">
    <property type="entry name" value="Prot_kinase_dom"/>
</dbReference>
<dbReference type="InterPro" id="IPR017441">
    <property type="entry name" value="Protein_kinase_ATP_BS"/>
</dbReference>
<dbReference type="InterPro" id="IPR011047">
    <property type="entry name" value="Quinoprotein_ADH-like_sf"/>
</dbReference>
<dbReference type="InterPro" id="IPR008936">
    <property type="entry name" value="Rho_GTPase_activation_prot"/>
</dbReference>
<dbReference type="InterPro" id="IPR001245">
    <property type="entry name" value="Ser-Thr/Tyr_kinase_cat_dom"/>
</dbReference>
<dbReference type="InterPro" id="IPR008271">
    <property type="entry name" value="Ser/Thr_kinase_AS"/>
</dbReference>
<dbReference type="InterPro" id="IPR051681">
    <property type="entry name" value="Ser/Thr_Kinases-Pseudokinases"/>
</dbReference>
<dbReference type="InterPro" id="IPR015943">
    <property type="entry name" value="WD40/YVTN_repeat-like_dom_sf"/>
</dbReference>
<dbReference type="InterPro" id="IPR001680">
    <property type="entry name" value="WD40_rpt"/>
</dbReference>
<dbReference type="PANTHER" id="PTHR44329:SF298">
    <property type="entry name" value="MIXED LINEAGE KINASE DOMAIN-LIKE PROTEIN"/>
    <property type="match status" value="1"/>
</dbReference>
<dbReference type="PANTHER" id="PTHR44329">
    <property type="entry name" value="SERINE/THREONINE-PROTEIN KINASE TNNI3K-RELATED"/>
    <property type="match status" value="1"/>
</dbReference>
<dbReference type="Pfam" id="PF16095">
    <property type="entry name" value="COR-A"/>
    <property type="match status" value="1"/>
</dbReference>
<dbReference type="Pfam" id="PF25497">
    <property type="entry name" value="COR-B"/>
    <property type="match status" value="1"/>
</dbReference>
<dbReference type="Pfam" id="PF07714">
    <property type="entry name" value="PK_Tyr_Ser-Thr"/>
    <property type="match status" value="1"/>
</dbReference>
<dbReference type="PRINTS" id="PR00109">
    <property type="entry name" value="TYRKINASE"/>
</dbReference>
<dbReference type="SMART" id="SM00220">
    <property type="entry name" value="S_TKc"/>
    <property type="match status" value="1"/>
</dbReference>
<dbReference type="SMART" id="SM00320">
    <property type="entry name" value="WD40"/>
    <property type="match status" value="2"/>
</dbReference>
<dbReference type="SUPFAM" id="SSF56112">
    <property type="entry name" value="Protein kinase-like (PK-like)"/>
    <property type="match status" value="1"/>
</dbReference>
<dbReference type="SUPFAM" id="SSF50998">
    <property type="entry name" value="Quinoprotein alcohol dehydrogenase-like"/>
    <property type="match status" value="1"/>
</dbReference>
<dbReference type="PROSITE" id="PS00107">
    <property type="entry name" value="PROTEIN_KINASE_ATP"/>
    <property type="match status" value="1"/>
</dbReference>
<dbReference type="PROSITE" id="PS50011">
    <property type="entry name" value="PROTEIN_KINASE_DOM"/>
    <property type="match status" value="1"/>
</dbReference>
<dbReference type="PROSITE" id="PS00108">
    <property type="entry name" value="PROTEIN_KINASE_ST"/>
    <property type="match status" value="1"/>
</dbReference>
<dbReference type="PROSITE" id="PS00678">
    <property type="entry name" value="WD_REPEATS_1"/>
    <property type="match status" value="1"/>
</dbReference>
<keyword id="KW-0067">ATP-binding</keyword>
<keyword id="KW-0418">Kinase</keyword>
<keyword id="KW-0547">Nucleotide-binding</keyword>
<keyword id="KW-1185">Reference proteome</keyword>
<keyword id="KW-0677">Repeat</keyword>
<keyword id="KW-0723">Serine/threonine-protein kinase</keyword>
<keyword id="KW-0808">Transferase</keyword>
<keyword id="KW-0853">WD repeat</keyword>
<comment type="catalytic activity">
    <reaction>
        <text>L-seryl-[protein] + ATP = O-phospho-L-seryl-[protein] + ADP + H(+)</text>
        <dbReference type="Rhea" id="RHEA:17989"/>
        <dbReference type="Rhea" id="RHEA-COMP:9863"/>
        <dbReference type="Rhea" id="RHEA-COMP:11604"/>
        <dbReference type="ChEBI" id="CHEBI:15378"/>
        <dbReference type="ChEBI" id="CHEBI:29999"/>
        <dbReference type="ChEBI" id="CHEBI:30616"/>
        <dbReference type="ChEBI" id="CHEBI:83421"/>
        <dbReference type="ChEBI" id="CHEBI:456216"/>
        <dbReference type="EC" id="2.7.11.1"/>
    </reaction>
</comment>
<comment type="catalytic activity">
    <reaction>
        <text>L-threonyl-[protein] + ATP = O-phospho-L-threonyl-[protein] + ADP + H(+)</text>
        <dbReference type="Rhea" id="RHEA:46608"/>
        <dbReference type="Rhea" id="RHEA-COMP:11060"/>
        <dbReference type="Rhea" id="RHEA-COMP:11605"/>
        <dbReference type="ChEBI" id="CHEBI:15378"/>
        <dbReference type="ChEBI" id="CHEBI:30013"/>
        <dbReference type="ChEBI" id="CHEBI:30616"/>
        <dbReference type="ChEBI" id="CHEBI:61977"/>
        <dbReference type="ChEBI" id="CHEBI:456216"/>
        <dbReference type="EC" id="2.7.11.1"/>
    </reaction>
</comment>
<comment type="similarity">
    <text evidence="5">Belongs to the protein kinase superfamily. TKL Ser/Thr protein kinase family. ROCO subfamily.</text>
</comment>
<protein>
    <recommendedName>
        <fullName>Probable serine/threonine-protein kinase roco7</fullName>
        <ecNumber>2.7.11.1</ecNumber>
    </recommendedName>
    <alternativeName>
        <fullName>Ras of complex proteins and C-terminal of roc 7</fullName>
    </alternativeName>
</protein>
<accession>Q55GE6</accession>
<accession>Q6XHA9</accession>
<proteinExistence type="inferred from homology"/>
<organism>
    <name type="scientific">Dictyostelium discoideum</name>
    <name type="common">Social amoeba</name>
    <dbReference type="NCBI Taxonomy" id="44689"/>
    <lineage>
        <taxon>Eukaryota</taxon>
        <taxon>Amoebozoa</taxon>
        <taxon>Evosea</taxon>
        <taxon>Eumycetozoa</taxon>
        <taxon>Dictyostelia</taxon>
        <taxon>Dictyosteliales</taxon>
        <taxon>Dictyosteliaceae</taxon>
        <taxon>Dictyostelium</taxon>
    </lineage>
</organism>
<name>ROCO7_DICDI</name>
<reference key="1">
    <citation type="journal article" date="2003" name="Biochim. Biophys. Acta">
        <title>Roc, a Ras/GTPase domain in complex proteins.</title>
        <authorList>
            <person name="Bosgraaf L."/>
            <person name="van Haastert P.J.M."/>
        </authorList>
    </citation>
    <scope>NUCLEOTIDE SEQUENCE [GENOMIC DNA]</scope>
</reference>
<reference key="2">
    <citation type="journal article" date="2005" name="Nature">
        <title>The genome of the social amoeba Dictyostelium discoideum.</title>
        <authorList>
            <person name="Eichinger L."/>
            <person name="Pachebat J.A."/>
            <person name="Gloeckner G."/>
            <person name="Rajandream M.A."/>
            <person name="Sucgang R."/>
            <person name="Berriman M."/>
            <person name="Song J."/>
            <person name="Olsen R."/>
            <person name="Szafranski K."/>
            <person name="Xu Q."/>
            <person name="Tunggal B."/>
            <person name="Kummerfeld S."/>
            <person name="Madera M."/>
            <person name="Konfortov B.A."/>
            <person name="Rivero F."/>
            <person name="Bankier A.T."/>
            <person name="Lehmann R."/>
            <person name="Hamlin N."/>
            <person name="Davies R."/>
            <person name="Gaudet P."/>
            <person name="Fey P."/>
            <person name="Pilcher K."/>
            <person name="Chen G."/>
            <person name="Saunders D."/>
            <person name="Sodergren E.J."/>
            <person name="Davis P."/>
            <person name="Kerhornou A."/>
            <person name="Nie X."/>
            <person name="Hall N."/>
            <person name="Anjard C."/>
            <person name="Hemphill L."/>
            <person name="Bason N."/>
            <person name="Farbrother P."/>
            <person name="Desany B."/>
            <person name="Just E."/>
            <person name="Morio T."/>
            <person name="Rost R."/>
            <person name="Churcher C.M."/>
            <person name="Cooper J."/>
            <person name="Haydock S."/>
            <person name="van Driessche N."/>
            <person name="Cronin A."/>
            <person name="Goodhead I."/>
            <person name="Muzny D.M."/>
            <person name="Mourier T."/>
            <person name="Pain A."/>
            <person name="Lu M."/>
            <person name="Harper D."/>
            <person name="Lindsay R."/>
            <person name="Hauser H."/>
            <person name="James K.D."/>
            <person name="Quiles M."/>
            <person name="Madan Babu M."/>
            <person name="Saito T."/>
            <person name="Buchrieser C."/>
            <person name="Wardroper A."/>
            <person name="Felder M."/>
            <person name="Thangavelu M."/>
            <person name="Johnson D."/>
            <person name="Knights A."/>
            <person name="Loulseged H."/>
            <person name="Mungall K.L."/>
            <person name="Oliver K."/>
            <person name="Price C."/>
            <person name="Quail M.A."/>
            <person name="Urushihara H."/>
            <person name="Hernandez J."/>
            <person name="Rabbinowitsch E."/>
            <person name="Steffen D."/>
            <person name="Sanders M."/>
            <person name="Ma J."/>
            <person name="Kohara Y."/>
            <person name="Sharp S."/>
            <person name="Simmonds M.N."/>
            <person name="Spiegler S."/>
            <person name="Tivey A."/>
            <person name="Sugano S."/>
            <person name="White B."/>
            <person name="Walker D."/>
            <person name="Woodward J.R."/>
            <person name="Winckler T."/>
            <person name="Tanaka Y."/>
            <person name="Shaulsky G."/>
            <person name="Schleicher M."/>
            <person name="Weinstock G.M."/>
            <person name="Rosenthal A."/>
            <person name="Cox E.C."/>
            <person name="Chisholm R.L."/>
            <person name="Gibbs R.A."/>
            <person name="Loomis W.F."/>
            <person name="Platzer M."/>
            <person name="Kay R.R."/>
            <person name="Williams J.G."/>
            <person name="Dear P.H."/>
            <person name="Noegel A.A."/>
            <person name="Barrell B.G."/>
            <person name="Kuspa A."/>
        </authorList>
    </citation>
    <scope>NUCLEOTIDE SEQUENCE [LARGE SCALE GENOMIC DNA]</scope>
    <source>
        <strain>AX4</strain>
    </source>
</reference>
<feature type="chain" id="PRO_0000358893" description="Probable serine/threonine-protein kinase roco7">
    <location>
        <begin position="1"/>
        <end position="2615"/>
    </location>
</feature>
<feature type="domain" description="COR" evidence="1">
    <location>
        <begin position="1441"/>
        <end position="1631"/>
    </location>
</feature>
<feature type="domain" description="Protein kinase" evidence="2">
    <location>
        <begin position="1775"/>
        <end position="2042"/>
    </location>
</feature>
<feature type="repeat" description="WD 1">
    <location>
        <begin position="2491"/>
        <end position="2527"/>
    </location>
</feature>
<feature type="repeat" description="WD 2">
    <location>
        <begin position="2533"/>
        <end position="2574"/>
    </location>
</feature>
<feature type="region of interest" description="Disordered" evidence="4">
    <location>
        <begin position="1"/>
        <end position="35"/>
    </location>
</feature>
<feature type="region of interest" description="Disordered" evidence="4">
    <location>
        <begin position="275"/>
        <end position="297"/>
    </location>
</feature>
<feature type="region of interest" description="Disordered" evidence="4">
    <location>
        <begin position="533"/>
        <end position="623"/>
    </location>
</feature>
<feature type="region of interest" description="Disordered" evidence="4">
    <location>
        <begin position="946"/>
        <end position="998"/>
    </location>
</feature>
<feature type="region of interest" description="Disordered" evidence="4">
    <location>
        <begin position="2061"/>
        <end position="2158"/>
    </location>
</feature>
<feature type="region of interest" description="Disordered" evidence="4">
    <location>
        <begin position="2176"/>
        <end position="2209"/>
    </location>
</feature>
<feature type="compositionally biased region" description="Low complexity" evidence="4">
    <location>
        <begin position="1"/>
        <end position="13"/>
    </location>
</feature>
<feature type="compositionally biased region" description="Low complexity" evidence="4">
    <location>
        <begin position="533"/>
        <end position="560"/>
    </location>
</feature>
<feature type="compositionally biased region" description="Low complexity" evidence="4">
    <location>
        <begin position="567"/>
        <end position="614"/>
    </location>
</feature>
<feature type="compositionally biased region" description="Low complexity" evidence="4">
    <location>
        <begin position="946"/>
        <end position="996"/>
    </location>
</feature>
<feature type="compositionally biased region" description="Low complexity" evidence="4">
    <location>
        <begin position="2073"/>
        <end position="2158"/>
    </location>
</feature>
<feature type="compositionally biased region" description="Low complexity" evidence="4">
    <location>
        <begin position="2182"/>
        <end position="2209"/>
    </location>
</feature>
<feature type="active site" description="Proton acceptor" evidence="2 3">
    <location>
        <position position="1899"/>
    </location>
</feature>
<feature type="binding site" evidence="2">
    <location>
        <begin position="1781"/>
        <end position="1789"/>
    </location>
    <ligand>
        <name>ATP</name>
        <dbReference type="ChEBI" id="CHEBI:30616"/>
    </ligand>
</feature>
<feature type="binding site" evidence="2">
    <location>
        <position position="1802"/>
    </location>
    <ligand>
        <name>ATP</name>
        <dbReference type="ChEBI" id="CHEBI:30616"/>
    </ligand>
</feature>
<feature type="sequence conflict" description="In Ref. 1; AAO83652." evidence="5" ref="1">
    <original>P</original>
    <variation>T</variation>
    <location>
        <position position="16"/>
    </location>
</feature>
<evidence type="ECO:0000255" key="1"/>
<evidence type="ECO:0000255" key="2">
    <source>
        <dbReference type="PROSITE-ProRule" id="PRU00159"/>
    </source>
</evidence>
<evidence type="ECO:0000255" key="3">
    <source>
        <dbReference type="PROSITE-ProRule" id="PRU10027"/>
    </source>
</evidence>
<evidence type="ECO:0000256" key="4">
    <source>
        <dbReference type="SAM" id="MobiDB-lite"/>
    </source>
</evidence>
<evidence type="ECO:0000305" key="5"/>
<sequence>MDGYSSLSSSGNSIAPPRPTNNSVGGGSNSNNYNQREITTPLRGMVPNLGDGSSSQTLLFKNILLLQDVEFFCSILDNFCRSSSTQKITDLINSLIVILDDSFLELLRLFIKQTIDQAKQCSTDESNPLNYQSFYNLINRMAAIYLKSQLGGLMEKTMISQVLNFTPMIQEQIVILANKEANKNNNNVLSANSTPNVTALKTSPAIGSPRIIMGSNYNNSSNNNNIDSIDLNNNSPNMLKNNSPSTFINGSVPQINGGGGSYNLTPISSPTIGSSTPTIITSSSSTTTPTNNNNSNNNTPIISQTIIQNINVEHMKDQISQFSISIINTIFRSIEKFPPTVFQLFEMLYLDIHQVFSPDFCFELMKKIFFTKLICPILANLKSPPNMANGKFFTKTYIEISKVVLDIAFDRDQSRRGSVTTQEQIMHFIKGMIFRNTHSISMTAALNPTLNNQVIPPSIPLPSKEEACNNFINNIRSESSELEESFKRAKDLNTCISFARADRQIYLFSIFKEMLINFKISFNLLNNNQNNNQNINQNNNNNNNQNCNSNTSSPIISSRSGFYTLRNSSTNSSPTNPPLTARGNGSISIGNNNNNNNNNNNNNNNNNNNNNNNNSGGGGGGLNNSSNLLINPWVSSYQNSNISNSDQVQSTRVVQSFSKKWTSDELRPTYLGKSPKKRSWVLDKKNIKTQIINLHIFLDNYSVCRIVTVPMNITFQALANRIHTDSEFSDIQLNKEEYEMVIRYPEESITVLNDEGNQEVICEPELPLWMFDIDTESIIIFRPIKRRSPSSSFNIFLKFIFPSNSSFNSSSSSLPSTPHQKINPMILYINPQSTPQSIIDKFSKLIQPSLLDTAHLGFYLRDIDDESSSPPSIKIPNNNSFAHNKISTMDIIECGPRLSYEFSITVNGTIQNILIDFDNQIDNVANIFYNIYQHLIELSPRSLSSSSSSSSDINNNNNNNTNNNIELTSSGRILTSNGSKHNSNNSNNSSGSSNISEQNLKRSSGIIDSIINGHSNNNSNNYALALLSNSNFLPMFLPGQSKLQDYCFNVGDELILTEKTFVQLVEVLATPRRPPIALSSSLSQSNAFNSNVYNSNAYNSNVYNSNPYLSNYNGLSSQSLNSMNVDGAGGVGGFNGEQNQQQNKVIARVRVIWAGSNSSVDRLQSFINTSQNVNTTYSGSTMALNDVLSNPNQLLSTPLSRPLLSTVIAQDNTYICTSKNDYCMNNQVKLCIVGEESQEKLSFYNSLRKNYSQNGLLSSGGGRGGGFFGSNFIPSSTSNVNEVSSIDGVLHTSELVVGSAEIDQITLKTFYISGNEQYQVVHPLFISPQSLFIITYNPMNINSTMINYWLEIIQTKAQGSTVYLVGLSNTSIDEKKFVSFKSEYHRLFRFNNINSYSNISLKNSKQIKQLVQRLQNNAMMKQYHYKIPLSYSILKSQCQESVKEAYARNKMPLSSIPLIKNIARIFSIEPRDSEAAIKYLYEIGEVLYYRYEANDQLLNELVFLDSMWMSKLISAVLALKTQNGMTVVDQITQAWASLFPHCKTSSLLFLLEKFELVYISAEDSSVIIPQLFGGERPMVMRDLWSPTAHANNEYLRIYEFQFLPKGFFSRLSVRVLQHYDPLCIWQNGMVLQPAGQLWGGAAKSFDSQCLIEYDSVNFILKVSIRDDNKQQQLLKSIVDLVSSFILWYFPGRLSNVRVACTHCTNQHIENPTMYTLDYLENQASLGQTNVICKAQLGGIIHETLSPRTTKIDIYSLAFEVTFNSNKFSVIPYETLKFGPQLGSGSYANVYRGIWNGSEVAIKVLNFDDGHANTTEKYREFRNEAHITGELRHANTVSLMGVSLSPFCLVTELLQYGDLAKFIRNTAETFSWGTVLKLAIDVAKGMNFLHSCKPMIVHRDLKSANILLGGSSMDNLVAKVGDFGLSIKPIGKEVKGRKVWNWRWLAPECMGDGQYTEKIDIYSYAIVLWEIITRDLPFEEYVDQLKWNSIIEDKIMKGLRPTIPNECPPDMKQLITDCWSGDPKKRPSFNSILERLSTMQKTFNLNERLEFCKQLPPINEDQINQQQQQPPPQSQAAQQQQPSTSTPPLSQHQQKLSISNLQLNNLLNNHNSNGSNSSIQSSLSHNNNNLNNNINNNNNNNNNNNNNSSGGSSGVSHSGSSGNNFVIPIITAIANGGIGSGGNQHQQNGSSTPHSNSQSNSGSSSVYESGDGSLSSAGSFKILRYEMVLPVAFTSTIHSLYPVQNNKNEVFVWCGMGDGSVCVINSATRQIVSTSRIADSSRILGFSLIRKCTPSSSSVTLTSRSSLNLSSLASGSTPSPYSSGGSGGSLGSSYQPICPTIEEDSHIWAFYNEGILCFEAKSFKLLKTIKTNFITSLVDEGESVWSNCKEKTSCIKVISKSKLKTKKLMNVKTLDAQITTILIHHSSVGAVGASRVWLGTDRGMIFILEYPSMAPIAHHESHGGALIHTIKRMDRFVITCSERVICIFDESGIIKKRLDGLASRVLSLLILDTYIIGACYDSTILVWDSKQNFRMVQSLKKKHTDAISSLAFALSPQGKPQLWVGGWDKKITTYSFFEDLESSLSIALQTPPPSSYPTLATPRLGLVNVSKSKLFG</sequence>
<gene>
    <name type="primary">roco7</name>
    <name type="ORF">DDB_G0267472</name>
</gene>